<organism>
    <name type="scientific">Jannaschia sp. (strain CCS1)</name>
    <dbReference type="NCBI Taxonomy" id="290400"/>
    <lineage>
        <taxon>Bacteria</taxon>
        <taxon>Pseudomonadati</taxon>
        <taxon>Pseudomonadota</taxon>
        <taxon>Alphaproteobacteria</taxon>
        <taxon>Rhodobacterales</taxon>
        <taxon>Roseobacteraceae</taxon>
        <taxon>Jannaschia</taxon>
    </lineage>
</organism>
<gene>
    <name evidence="1" type="primary">uvrC</name>
    <name type="ordered locus">Jann_3919</name>
</gene>
<accession>Q28KC6</accession>
<reference key="1">
    <citation type="submission" date="2006-02" db="EMBL/GenBank/DDBJ databases">
        <title>Complete sequence of chromosome of Jannaschia sp. CCS1.</title>
        <authorList>
            <consortium name="US DOE Joint Genome Institute"/>
            <person name="Copeland A."/>
            <person name="Lucas S."/>
            <person name="Lapidus A."/>
            <person name="Barry K."/>
            <person name="Detter J.C."/>
            <person name="Glavina del Rio T."/>
            <person name="Hammon N."/>
            <person name="Israni S."/>
            <person name="Pitluck S."/>
            <person name="Brettin T."/>
            <person name="Bruce D."/>
            <person name="Han C."/>
            <person name="Tapia R."/>
            <person name="Gilna P."/>
            <person name="Chertkov O."/>
            <person name="Saunders E."/>
            <person name="Schmutz J."/>
            <person name="Larimer F."/>
            <person name="Land M."/>
            <person name="Kyrpides N."/>
            <person name="Lykidis A."/>
            <person name="Moran M.A."/>
            <person name="Belas R."/>
            <person name="Ye W."/>
            <person name="Buchan A."/>
            <person name="Gonzalez J.M."/>
            <person name="Schell M.A."/>
            <person name="Richardson P."/>
        </authorList>
    </citation>
    <scope>NUCLEOTIDE SEQUENCE [LARGE SCALE GENOMIC DNA]</scope>
    <source>
        <strain>CCS1</strain>
    </source>
</reference>
<protein>
    <recommendedName>
        <fullName evidence="1">UvrABC system protein C</fullName>
        <shortName evidence="1">Protein UvrC</shortName>
    </recommendedName>
    <alternativeName>
        <fullName evidence="1">Excinuclease ABC subunit C</fullName>
    </alternativeName>
</protein>
<dbReference type="EMBL" id="CP000264">
    <property type="protein sequence ID" value="ABD56836.1"/>
    <property type="molecule type" value="Genomic_DNA"/>
</dbReference>
<dbReference type="RefSeq" id="WP_011457033.1">
    <property type="nucleotide sequence ID" value="NC_007802.1"/>
</dbReference>
<dbReference type="SMR" id="Q28KC6"/>
<dbReference type="STRING" id="290400.Jann_3919"/>
<dbReference type="KEGG" id="jan:Jann_3919"/>
<dbReference type="eggNOG" id="COG0322">
    <property type="taxonomic scope" value="Bacteria"/>
</dbReference>
<dbReference type="HOGENOM" id="CLU_014841_3_0_5"/>
<dbReference type="OrthoDB" id="9804933at2"/>
<dbReference type="Proteomes" id="UP000008326">
    <property type="component" value="Chromosome"/>
</dbReference>
<dbReference type="GO" id="GO:0005737">
    <property type="term" value="C:cytoplasm"/>
    <property type="evidence" value="ECO:0007669"/>
    <property type="project" value="UniProtKB-SubCell"/>
</dbReference>
<dbReference type="GO" id="GO:0009380">
    <property type="term" value="C:excinuclease repair complex"/>
    <property type="evidence" value="ECO:0007669"/>
    <property type="project" value="InterPro"/>
</dbReference>
<dbReference type="GO" id="GO:0003677">
    <property type="term" value="F:DNA binding"/>
    <property type="evidence" value="ECO:0007669"/>
    <property type="project" value="UniProtKB-UniRule"/>
</dbReference>
<dbReference type="GO" id="GO:0009381">
    <property type="term" value="F:excinuclease ABC activity"/>
    <property type="evidence" value="ECO:0007669"/>
    <property type="project" value="UniProtKB-UniRule"/>
</dbReference>
<dbReference type="GO" id="GO:0006289">
    <property type="term" value="P:nucleotide-excision repair"/>
    <property type="evidence" value="ECO:0007669"/>
    <property type="project" value="UniProtKB-UniRule"/>
</dbReference>
<dbReference type="GO" id="GO:0009432">
    <property type="term" value="P:SOS response"/>
    <property type="evidence" value="ECO:0007669"/>
    <property type="project" value="UniProtKB-UniRule"/>
</dbReference>
<dbReference type="CDD" id="cd10434">
    <property type="entry name" value="GIY-YIG_UvrC_Cho"/>
    <property type="match status" value="1"/>
</dbReference>
<dbReference type="FunFam" id="3.30.420.340:FF:000001">
    <property type="entry name" value="UvrABC system protein C"/>
    <property type="match status" value="1"/>
</dbReference>
<dbReference type="FunFam" id="3.40.1440.10:FF:000001">
    <property type="entry name" value="UvrABC system protein C"/>
    <property type="match status" value="1"/>
</dbReference>
<dbReference type="Gene3D" id="1.10.150.20">
    <property type="entry name" value="5' to 3' exonuclease, C-terminal subdomain"/>
    <property type="match status" value="1"/>
</dbReference>
<dbReference type="Gene3D" id="3.40.1440.10">
    <property type="entry name" value="GIY-YIG endonuclease"/>
    <property type="match status" value="1"/>
</dbReference>
<dbReference type="Gene3D" id="4.10.860.10">
    <property type="entry name" value="UVR domain"/>
    <property type="match status" value="1"/>
</dbReference>
<dbReference type="Gene3D" id="3.30.420.340">
    <property type="entry name" value="UvrC, RNAse H endonuclease domain"/>
    <property type="match status" value="1"/>
</dbReference>
<dbReference type="HAMAP" id="MF_00203">
    <property type="entry name" value="UvrC"/>
    <property type="match status" value="1"/>
</dbReference>
<dbReference type="InterPro" id="IPR000305">
    <property type="entry name" value="GIY-YIG_endonuc"/>
</dbReference>
<dbReference type="InterPro" id="IPR035901">
    <property type="entry name" value="GIY-YIG_endonuc_sf"/>
</dbReference>
<dbReference type="InterPro" id="IPR047296">
    <property type="entry name" value="GIY-YIG_UvrC_Cho"/>
</dbReference>
<dbReference type="InterPro" id="IPR003583">
    <property type="entry name" value="Hlx-hairpin-Hlx_DNA-bd_motif"/>
</dbReference>
<dbReference type="InterPro" id="IPR010994">
    <property type="entry name" value="RuvA_2-like"/>
</dbReference>
<dbReference type="InterPro" id="IPR001943">
    <property type="entry name" value="UVR_dom"/>
</dbReference>
<dbReference type="InterPro" id="IPR036876">
    <property type="entry name" value="UVR_dom_sf"/>
</dbReference>
<dbReference type="InterPro" id="IPR050066">
    <property type="entry name" value="UvrABC_protein_C"/>
</dbReference>
<dbReference type="InterPro" id="IPR004791">
    <property type="entry name" value="UvrC"/>
</dbReference>
<dbReference type="InterPro" id="IPR001162">
    <property type="entry name" value="UvrC_RNase_H_dom"/>
</dbReference>
<dbReference type="InterPro" id="IPR038476">
    <property type="entry name" value="UvrC_RNase_H_dom_sf"/>
</dbReference>
<dbReference type="NCBIfam" id="NF001824">
    <property type="entry name" value="PRK00558.1-5"/>
    <property type="match status" value="1"/>
</dbReference>
<dbReference type="NCBIfam" id="TIGR00194">
    <property type="entry name" value="uvrC"/>
    <property type="match status" value="1"/>
</dbReference>
<dbReference type="PANTHER" id="PTHR30562:SF1">
    <property type="entry name" value="UVRABC SYSTEM PROTEIN C"/>
    <property type="match status" value="1"/>
</dbReference>
<dbReference type="PANTHER" id="PTHR30562">
    <property type="entry name" value="UVRC/OXIDOREDUCTASE"/>
    <property type="match status" value="1"/>
</dbReference>
<dbReference type="Pfam" id="PF01541">
    <property type="entry name" value="GIY-YIG"/>
    <property type="match status" value="1"/>
</dbReference>
<dbReference type="Pfam" id="PF14520">
    <property type="entry name" value="HHH_5"/>
    <property type="match status" value="1"/>
</dbReference>
<dbReference type="Pfam" id="PF02151">
    <property type="entry name" value="UVR"/>
    <property type="match status" value="1"/>
</dbReference>
<dbReference type="Pfam" id="PF22920">
    <property type="entry name" value="UvrC_RNaseH"/>
    <property type="match status" value="1"/>
</dbReference>
<dbReference type="Pfam" id="PF08459">
    <property type="entry name" value="UvrC_RNaseH_dom"/>
    <property type="match status" value="1"/>
</dbReference>
<dbReference type="SMART" id="SM00465">
    <property type="entry name" value="GIYc"/>
    <property type="match status" value="1"/>
</dbReference>
<dbReference type="SMART" id="SM00278">
    <property type="entry name" value="HhH1"/>
    <property type="match status" value="2"/>
</dbReference>
<dbReference type="SUPFAM" id="SSF46600">
    <property type="entry name" value="C-terminal UvrC-binding domain of UvrB"/>
    <property type="match status" value="1"/>
</dbReference>
<dbReference type="SUPFAM" id="SSF82771">
    <property type="entry name" value="GIY-YIG endonuclease"/>
    <property type="match status" value="1"/>
</dbReference>
<dbReference type="SUPFAM" id="SSF47781">
    <property type="entry name" value="RuvA domain 2-like"/>
    <property type="match status" value="1"/>
</dbReference>
<dbReference type="PROSITE" id="PS50164">
    <property type="entry name" value="GIY_YIG"/>
    <property type="match status" value="1"/>
</dbReference>
<dbReference type="PROSITE" id="PS50151">
    <property type="entry name" value="UVR"/>
    <property type="match status" value="1"/>
</dbReference>
<dbReference type="PROSITE" id="PS50165">
    <property type="entry name" value="UVRC"/>
    <property type="match status" value="1"/>
</dbReference>
<comment type="function">
    <text evidence="1">The UvrABC repair system catalyzes the recognition and processing of DNA lesions. UvrC both incises the 5' and 3' sides of the lesion. The N-terminal half is responsible for the 3' incision and the C-terminal half is responsible for the 5' incision.</text>
</comment>
<comment type="subunit">
    <text evidence="1">Interacts with UvrB in an incision complex.</text>
</comment>
<comment type="subcellular location">
    <subcellularLocation>
        <location evidence="1">Cytoplasm</location>
    </subcellularLocation>
</comment>
<comment type="similarity">
    <text evidence="1">Belongs to the UvrC family.</text>
</comment>
<feature type="chain" id="PRO_0000264903" description="UvrABC system protein C">
    <location>
        <begin position="1"/>
        <end position="631"/>
    </location>
</feature>
<feature type="domain" description="GIY-YIG" evidence="1">
    <location>
        <begin position="34"/>
        <end position="112"/>
    </location>
</feature>
<feature type="domain" description="UVR" evidence="1">
    <location>
        <begin position="222"/>
        <end position="257"/>
    </location>
</feature>
<feature type="region of interest" description="Disordered" evidence="2">
    <location>
        <begin position="1"/>
        <end position="20"/>
    </location>
</feature>
<evidence type="ECO:0000255" key="1">
    <source>
        <dbReference type="HAMAP-Rule" id="MF_00203"/>
    </source>
</evidence>
<evidence type="ECO:0000256" key="2">
    <source>
        <dbReference type="SAM" id="MobiDB-lite"/>
    </source>
</evidence>
<name>UVRC_JANSC</name>
<sequence length="631" mass="69618">MKNETEAVADQPPKTGPVKPGHEVIADYVRTLDMSPGVYRMLDSQSRVLYVGKARALKRRVASYAKPSGHSPRIARMIRDTASMMFLTTRTETEALLLEQNLIKQLKPKFNVLLRDDKSFPNILVSDEHAFPQIKKHRGSKKEKGSYFGPFASAGAVNRTLNQLQKVFLLRNCTDAVFESRTRPCLLYQIKRCSGPCVGHISEEDYGASVKDAVRFLKGDSTDLQRQLADGMAAASEAMEFERAAALRDRIRALTNVQSAQGINPQGVKEADVIALHMEGGQACVQVFFIRANQNWGNRDFYPRVGADIEEPEVLEAFLGQFYDQKEPPKQLLLSHPVESMDLMVDALSGKRGTKVEILVPQRGEKAELVDGARRNARESLGRKMAETQAQGKLLDGLAGAFGLDGPPKRVEVYDNSHIQGAHAVGAMIVAGPEGYLKSQYRKFNIKGGSLTPGDDFGMMKEVLTRRFARLLKEDPDRETEAWPDLLLIDGGAGQISAVKEIMDDLGVDDVPFIGVAKGIDRDQGKEEFYRPGQPVFALKRNDPVLYFVQRMRDEAHRFAIGAHRAKRSKAVSATPLDDVPGVGAGRKRALLAHFGSAKAVARANLSDLTAVDGVSEGLAQKIYDFFHDQA</sequence>
<proteinExistence type="inferred from homology"/>
<keyword id="KW-0963">Cytoplasm</keyword>
<keyword id="KW-0227">DNA damage</keyword>
<keyword id="KW-0228">DNA excision</keyword>
<keyword id="KW-0234">DNA repair</keyword>
<keyword id="KW-0267">Excision nuclease</keyword>
<keyword id="KW-1185">Reference proteome</keyword>
<keyword id="KW-0742">SOS response</keyword>